<organism>
    <name type="scientific">Streptococcus pyogenes serotype M12 (strain MGAS9429)</name>
    <dbReference type="NCBI Taxonomy" id="370551"/>
    <lineage>
        <taxon>Bacteria</taxon>
        <taxon>Bacillati</taxon>
        <taxon>Bacillota</taxon>
        <taxon>Bacilli</taxon>
        <taxon>Lactobacillales</taxon>
        <taxon>Streptococcaceae</taxon>
        <taxon>Streptococcus</taxon>
    </lineage>
</organism>
<reference key="1">
    <citation type="journal article" date="2006" name="Proc. Natl. Acad. Sci. U.S.A.">
        <title>Molecular genetic anatomy of inter- and intraserotype variation in the human bacterial pathogen group A Streptococcus.</title>
        <authorList>
            <person name="Beres S.B."/>
            <person name="Richter E.W."/>
            <person name="Nagiec M.J."/>
            <person name="Sumby P."/>
            <person name="Porcella S.F."/>
            <person name="DeLeo F.R."/>
            <person name="Musser J.M."/>
        </authorList>
    </citation>
    <scope>NUCLEOTIDE SEQUENCE [LARGE SCALE GENOMIC DNA]</scope>
    <source>
        <strain>MGAS9429</strain>
    </source>
</reference>
<proteinExistence type="inferred from homology"/>
<gene>
    <name evidence="1" type="primary">murE</name>
    <name type="ordered locus">MGAS9429_Spy0324</name>
</gene>
<accession>Q1JN87</accession>
<name>MURE_STRPC</name>
<sequence length="481" mass="53479">MITIEQLLDILKKDHNFREVLDADGYHYHYQGLSFERLSYDSRQVDGKTLFFAKGATFKADYLKEAITNGLQLYISEVDYELGIPVVLVTDIKKAMSLIAMAFYGNPQEKLKLLAFTGTKGKTTAAYFAYHMLKESYKPAMFSTMNTTLDGKTFFKSQLTTPESLDLFAMMAECVTNGMTHLIMEVSSQAYLVDRVYGLTFDVGVFLNISPDHIGPIEHPTFEDYFYHKRLLMENSRAVVINSGMDHFSFLADQVADQEHVFYGPLSDNQITTSQAFSFEAKGQLAGHYDIQLIGHFNQENAMAAGLACLRLGASLADIQKGIAKTRVPGRMEVLTMTNHAKVFVDYAHNGDSLEKLLSVVEEHQTGKLMLILGAPGNKGESRRADFGRVIHQHPNLTVILTADDPNFEDPEDISKEIASHIARPVEIISDREQAIQKAMSLCQGAKDAVIIAGKGADAYQIVKGQQVAYAGDLAIAKHYL</sequence>
<comment type="function">
    <text evidence="1">Catalyzes the addition of L-lysine to the nucleotide precursor UDP-N-acetylmuramoyl-L-alanyl-D-glutamate (UMAG) in the biosynthesis of bacterial cell-wall peptidoglycan.</text>
</comment>
<comment type="catalytic activity">
    <reaction evidence="1">
        <text>UDP-N-acetyl-alpha-D-muramoyl-L-alanyl-D-glutamate + L-lysine + ATP = UDP-N-acetyl-alpha-D-muramoyl-L-alanyl-gamma-D-glutamyl-L-lysine + ADP + phosphate + H(+)</text>
        <dbReference type="Rhea" id="RHEA:17969"/>
        <dbReference type="ChEBI" id="CHEBI:15378"/>
        <dbReference type="ChEBI" id="CHEBI:30616"/>
        <dbReference type="ChEBI" id="CHEBI:32551"/>
        <dbReference type="ChEBI" id="CHEBI:43474"/>
        <dbReference type="ChEBI" id="CHEBI:83900"/>
        <dbReference type="ChEBI" id="CHEBI:83903"/>
        <dbReference type="ChEBI" id="CHEBI:456216"/>
        <dbReference type="EC" id="6.3.2.7"/>
    </reaction>
</comment>
<comment type="pathway">
    <text evidence="1">Cell wall biogenesis; peptidoglycan biosynthesis.</text>
</comment>
<comment type="subcellular location">
    <subcellularLocation>
        <location evidence="1">Cytoplasm</location>
    </subcellularLocation>
</comment>
<comment type="PTM">
    <text evidence="1">Carboxylation is probably crucial for Mg(2+) binding and, consequently, for the gamma-phosphate positioning of ATP.</text>
</comment>
<comment type="similarity">
    <text evidence="1">Belongs to the MurCDEF family. MurE subfamily.</text>
</comment>
<protein>
    <recommendedName>
        <fullName evidence="1">UDP-N-acetylmuramoyl-L-alanyl-D-glutamate--L-lysine ligase</fullName>
        <ecNumber evidence="1">6.3.2.7</ecNumber>
    </recommendedName>
    <alternativeName>
        <fullName evidence="1">L-lysine-adding enzyme</fullName>
    </alternativeName>
    <alternativeName>
        <fullName evidence="1">UDP-MurNAc-L-Ala-D-Glu:L-Lys ligase</fullName>
    </alternativeName>
    <alternativeName>
        <fullName evidence="1">UDP-MurNAc-tripeptide synthetase</fullName>
    </alternativeName>
    <alternativeName>
        <fullName evidence="1">UDP-N-acetylmuramyl-tripeptide synthetase</fullName>
    </alternativeName>
</protein>
<keyword id="KW-0067">ATP-binding</keyword>
<keyword id="KW-0131">Cell cycle</keyword>
<keyword id="KW-0132">Cell division</keyword>
<keyword id="KW-0133">Cell shape</keyword>
<keyword id="KW-0961">Cell wall biogenesis/degradation</keyword>
<keyword id="KW-0963">Cytoplasm</keyword>
<keyword id="KW-0436">Ligase</keyword>
<keyword id="KW-0547">Nucleotide-binding</keyword>
<keyword id="KW-0573">Peptidoglycan synthesis</keyword>
<evidence type="ECO:0000255" key="1">
    <source>
        <dbReference type="HAMAP-Rule" id="MF_00208"/>
    </source>
</evidence>
<dbReference type="EC" id="6.3.2.7" evidence="1"/>
<dbReference type="EMBL" id="CP000259">
    <property type="protein sequence ID" value="ABF31512.1"/>
    <property type="molecule type" value="Genomic_DNA"/>
</dbReference>
<dbReference type="RefSeq" id="WP_002990934.1">
    <property type="nucleotide sequence ID" value="NC_008021.1"/>
</dbReference>
<dbReference type="SMR" id="Q1JN87"/>
<dbReference type="KEGG" id="spk:MGAS9429_Spy0324"/>
<dbReference type="HOGENOM" id="CLU_022291_4_2_9"/>
<dbReference type="UniPathway" id="UPA00219"/>
<dbReference type="Proteomes" id="UP000002433">
    <property type="component" value="Chromosome"/>
</dbReference>
<dbReference type="GO" id="GO:0005737">
    <property type="term" value="C:cytoplasm"/>
    <property type="evidence" value="ECO:0007669"/>
    <property type="project" value="UniProtKB-SubCell"/>
</dbReference>
<dbReference type="GO" id="GO:0005524">
    <property type="term" value="F:ATP binding"/>
    <property type="evidence" value="ECO:0007669"/>
    <property type="project" value="UniProtKB-UniRule"/>
</dbReference>
<dbReference type="GO" id="GO:0000287">
    <property type="term" value="F:magnesium ion binding"/>
    <property type="evidence" value="ECO:0007669"/>
    <property type="project" value="UniProtKB-UniRule"/>
</dbReference>
<dbReference type="GO" id="GO:0047482">
    <property type="term" value="F:UDP-N-acetylmuramoyl-L-alanyl-D-glutamate-L-lysine ligase activity"/>
    <property type="evidence" value="ECO:0007669"/>
    <property type="project" value="UniProtKB-UniRule"/>
</dbReference>
<dbReference type="GO" id="GO:0051301">
    <property type="term" value="P:cell division"/>
    <property type="evidence" value="ECO:0007669"/>
    <property type="project" value="UniProtKB-KW"/>
</dbReference>
<dbReference type="GO" id="GO:0071555">
    <property type="term" value="P:cell wall organization"/>
    <property type="evidence" value="ECO:0007669"/>
    <property type="project" value="UniProtKB-KW"/>
</dbReference>
<dbReference type="GO" id="GO:0009252">
    <property type="term" value="P:peptidoglycan biosynthetic process"/>
    <property type="evidence" value="ECO:0007669"/>
    <property type="project" value="UniProtKB-UniRule"/>
</dbReference>
<dbReference type="GO" id="GO:0008360">
    <property type="term" value="P:regulation of cell shape"/>
    <property type="evidence" value="ECO:0007669"/>
    <property type="project" value="UniProtKB-KW"/>
</dbReference>
<dbReference type="Gene3D" id="3.90.190.20">
    <property type="entry name" value="Mur ligase, C-terminal domain"/>
    <property type="match status" value="1"/>
</dbReference>
<dbReference type="Gene3D" id="3.40.1190.10">
    <property type="entry name" value="Mur-like, catalytic domain"/>
    <property type="match status" value="1"/>
</dbReference>
<dbReference type="Gene3D" id="3.40.1390.10">
    <property type="entry name" value="MurE/MurF, N-terminal domain"/>
    <property type="match status" value="1"/>
</dbReference>
<dbReference type="HAMAP" id="MF_00208">
    <property type="entry name" value="MurE"/>
    <property type="match status" value="1"/>
</dbReference>
<dbReference type="InterPro" id="IPR036565">
    <property type="entry name" value="Mur-like_cat_sf"/>
</dbReference>
<dbReference type="InterPro" id="IPR004101">
    <property type="entry name" value="Mur_ligase_C"/>
</dbReference>
<dbReference type="InterPro" id="IPR036615">
    <property type="entry name" value="Mur_ligase_C_dom_sf"/>
</dbReference>
<dbReference type="InterPro" id="IPR013221">
    <property type="entry name" value="Mur_ligase_cen"/>
</dbReference>
<dbReference type="InterPro" id="IPR035911">
    <property type="entry name" value="MurE/MurF_N"/>
</dbReference>
<dbReference type="InterPro" id="IPR005761">
    <property type="entry name" value="UDP-N-AcMur-Glu-dNH2Pim_ligase"/>
</dbReference>
<dbReference type="NCBIfam" id="TIGR01085">
    <property type="entry name" value="murE"/>
    <property type="match status" value="1"/>
</dbReference>
<dbReference type="NCBIfam" id="NF010628">
    <property type="entry name" value="PRK14022.1"/>
    <property type="match status" value="1"/>
</dbReference>
<dbReference type="PANTHER" id="PTHR23135">
    <property type="entry name" value="MUR LIGASE FAMILY MEMBER"/>
    <property type="match status" value="1"/>
</dbReference>
<dbReference type="PANTHER" id="PTHR23135:SF4">
    <property type="entry name" value="UDP-N-ACETYLMURAMOYL-L-ALANYL-D-GLUTAMATE--2,6-DIAMINOPIMELATE LIGASE MURE HOMOLOG, CHLOROPLASTIC"/>
    <property type="match status" value="1"/>
</dbReference>
<dbReference type="Pfam" id="PF02875">
    <property type="entry name" value="Mur_ligase_C"/>
    <property type="match status" value="1"/>
</dbReference>
<dbReference type="Pfam" id="PF08245">
    <property type="entry name" value="Mur_ligase_M"/>
    <property type="match status" value="1"/>
</dbReference>
<dbReference type="SUPFAM" id="SSF53623">
    <property type="entry name" value="MurD-like peptide ligases, catalytic domain"/>
    <property type="match status" value="1"/>
</dbReference>
<dbReference type="SUPFAM" id="SSF53244">
    <property type="entry name" value="MurD-like peptide ligases, peptide-binding domain"/>
    <property type="match status" value="1"/>
</dbReference>
<dbReference type="SUPFAM" id="SSF63418">
    <property type="entry name" value="MurE/MurF N-terminal domain"/>
    <property type="match status" value="1"/>
</dbReference>
<feature type="chain" id="PRO_1000012387" description="UDP-N-acetylmuramoyl-L-alanyl-D-glutamate--L-lysine ligase">
    <location>
        <begin position="1"/>
        <end position="481"/>
    </location>
</feature>
<feature type="short sequence motif" description="L-lysine recognition motif">
    <location>
        <begin position="404"/>
        <end position="407"/>
    </location>
</feature>
<feature type="binding site" evidence="1">
    <location>
        <position position="42"/>
    </location>
    <ligand>
        <name>UDP-N-acetyl-alpha-D-muramoyl-L-alanyl-D-glutamate</name>
        <dbReference type="ChEBI" id="CHEBI:83900"/>
    </ligand>
</feature>
<feature type="binding site" evidence="1">
    <location>
        <begin position="118"/>
        <end position="124"/>
    </location>
    <ligand>
        <name>ATP</name>
        <dbReference type="ChEBI" id="CHEBI:30616"/>
    </ligand>
</feature>
<feature type="binding site" evidence="1">
    <location>
        <position position="158"/>
    </location>
    <ligand>
        <name>UDP-N-acetyl-alpha-D-muramoyl-L-alanyl-D-glutamate</name>
        <dbReference type="ChEBI" id="CHEBI:83900"/>
    </ligand>
</feature>
<feature type="binding site" evidence="1">
    <location>
        <begin position="160"/>
        <end position="161"/>
    </location>
    <ligand>
        <name>UDP-N-acetyl-alpha-D-muramoyl-L-alanyl-D-glutamate</name>
        <dbReference type="ChEBI" id="CHEBI:83900"/>
    </ligand>
</feature>
<feature type="binding site" evidence="1">
    <location>
        <position position="187"/>
    </location>
    <ligand>
        <name>UDP-N-acetyl-alpha-D-muramoyl-L-alanyl-D-glutamate</name>
        <dbReference type="ChEBI" id="CHEBI:83900"/>
    </ligand>
</feature>
<feature type="binding site" evidence="1">
    <location>
        <position position="195"/>
    </location>
    <ligand>
        <name>UDP-N-acetyl-alpha-D-muramoyl-L-alanyl-D-glutamate</name>
        <dbReference type="ChEBI" id="CHEBI:83900"/>
    </ligand>
</feature>
<feature type="modified residue" description="N6-carboxylysine" evidence="1">
    <location>
        <position position="229"/>
    </location>
</feature>